<dbReference type="EMBL" id="Z18897">
    <property type="protein sequence ID" value="CAA79334.1"/>
    <property type="molecule type" value="Genomic_DNA"/>
</dbReference>
<dbReference type="EMBL" id="Z18291">
    <property type="protein sequence ID" value="CAA79162.1"/>
    <property type="molecule type" value="mRNA"/>
</dbReference>
<dbReference type="PIR" id="I46407">
    <property type="entry name" value="I46407"/>
</dbReference>
<dbReference type="RefSeq" id="NP_001009420.1">
    <property type="nucleotide sequence ID" value="NM_001009420.2"/>
</dbReference>
<dbReference type="SMR" id="Q06435"/>
<dbReference type="STRING" id="9940.ENSOARP00000016653"/>
<dbReference type="GlyCosmos" id="Q06435">
    <property type="glycosylation" value="1 site, No reported glycans"/>
</dbReference>
<dbReference type="PaxDb" id="9940-ENSOARP00000016653"/>
<dbReference type="Ensembl" id="ENSOART00040003697">
    <property type="protein sequence ID" value="ENSOARP00040001776"/>
    <property type="gene ID" value="ENSOARG00040002360"/>
</dbReference>
<dbReference type="Ensembl" id="ENSOART00185045263">
    <property type="protein sequence ID" value="ENSOARP00185022348"/>
    <property type="gene ID" value="ENSOARG00185027503"/>
</dbReference>
<dbReference type="Ensembl" id="ENSOART00215008018">
    <property type="protein sequence ID" value="ENSOARP00215004356"/>
    <property type="gene ID" value="ENSOARG00215004768"/>
</dbReference>
<dbReference type="Ensembl" id="ENSOART00220027421">
    <property type="protein sequence ID" value="ENSOARP00220015012"/>
    <property type="gene ID" value="ENSOARG00220016485"/>
</dbReference>
<dbReference type="Ensembl" id="ENSOART00225005323">
    <property type="protein sequence ID" value="ENSOARP00225002338"/>
    <property type="gene ID" value="ENSOARG00225003313"/>
</dbReference>
<dbReference type="Ensembl" id="ENSOART00260041877">
    <property type="protein sequence ID" value="ENSOARP00260021490"/>
    <property type="gene ID" value="ENSOARG00260025419"/>
</dbReference>
<dbReference type="GeneID" id="443438"/>
<dbReference type="KEGG" id="oas:443438"/>
<dbReference type="CTD" id="3562"/>
<dbReference type="eggNOG" id="ENOG502TD4X">
    <property type="taxonomic scope" value="Eukaryota"/>
</dbReference>
<dbReference type="OrthoDB" id="9680893at2759"/>
<dbReference type="Proteomes" id="UP000002356">
    <property type="component" value="Unplaced"/>
</dbReference>
<dbReference type="GO" id="GO:0005615">
    <property type="term" value="C:extracellular space"/>
    <property type="evidence" value="ECO:0000250"/>
    <property type="project" value="UniProtKB"/>
</dbReference>
<dbReference type="GO" id="GO:0005125">
    <property type="term" value="F:cytokine activity"/>
    <property type="evidence" value="ECO:0000250"/>
    <property type="project" value="UniProtKB"/>
</dbReference>
<dbReference type="GO" id="GO:0008083">
    <property type="term" value="F:growth factor activity"/>
    <property type="evidence" value="ECO:0007669"/>
    <property type="project" value="UniProtKB-KW"/>
</dbReference>
<dbReference type="GO" id="GO:0005135">
    <property type="term" value="F:interleukin-3 receptor binding"/>
    <property type="evidence" value="ECO:0007669"/>
    <property type="project" value="InterPro"/>
</dbReference>
<dbReference type="GO" id="GO:0006955">
    <property type="term" value="P:immune response"/>
    <property type="evidence" value="ECO:0007669"/>
    <property type="project" value="InterPro"/>
</dbReference>
<dbReference type="GO" id="GO:0008284">
    <property type="term" value="P:positive regulation of cell population proliferation"/>
    <property type="evidence" value="ECO:0000250"/>
    <property type="project" value="UniProtKB"/>
</dbReference>
<dbReference type="FunFam" id="1.20.1250.10:FF:000067">
    <property type="entry name" value="Interleukin-3"/>
    <property type="match status" value="1"/>
</dbReference>
<dbReference type="Gene3D" id="1.20.1250.10">
    <property type="match status" value="1"/>
</dbReference>
<dbReference type="InterPro" id="IPR009079">
    <property type="entry name" value="4_helix_cytokine-like_core"/>
</dbReference>
<dbReference type="InterPro" id="IPR002183">
    <property type="entry name" value="IL-3"/>
</dbReference>
<dbReference type="PANTHER" id="PTHR48489">
    <property type="entry name" value="INTERLEUKIN-3"/>
    <property type="match status" value="1"/>
</dbReference>
<dbReference type="PANTHER" id="PTHR48489:SF1">
    <property type="entry name" value="INTERLEUKIN-3"/>
    <property type="match status" value="1"/>
</dbReference>
<dbReference type="Pfam" id="PF02059">
    <property type="entry name" value="IL3"/>
    <property type="match status" value="1"/>
</dbReference>
<dbReference type="PIRSF" id="PIRSF001939">
    <property type="entry name" value="IL-3"/>
    <property type="match status" value="1"/>
</dbReference>
<dbReference type="PRINTS" id="PR00430">
    <property type="entry name" value="INTERLEUKIN3"/>
</dbReference>
<dbReference type="SUPFAM" id="SSF47266">
    <property type="entry name" value="4-helical cytokines"/>
    <property type="match status" value="1"/>
</dbReference>
<gene>
    <name type="primary">IL3</name>
    <name type="synonym">IL-3</name>
</gene>
<accession>Q06435</accession>
<sequence length="146" mass="16233">MSSLSILHLLLLLLSLHAPQAQGLPLRTPRTPYSSLMEEIMDDLKKITPSPEGSLNSDEKNILANKSLLQANLKAFMTFATDTFGSDSKIMKNLKEFQPVLPTATPTEDSILIEDSNLGDFRMKLEEYLATIRGYLRHDLAAAETI</sequence>
<organism>
    <name type="scientific">Ovis aries</name>
    <name type="common">Sheep</name>
    <dbReference type="NCBI Taxonomy" id="9940"/>
    <lineage>
        <taxon>Eukaryota</taxon>
        <taxon>Metazoa</taxon>
        <taxon>Chordata</taxon>
        <taxon>Craniata</taxon>
        <taxon>Vertebrata</taxon>
        <taxon>Euteleostomi</taxon>
        <taxon>Mammalia</taxon>
        <taxon>Eutheria</taxon>
        <taxon>Laurasiatheria</taxon>
        <taxon>Artiodactyla</taxon>
        <taxon>Ruminantia</taxon>
        <taxon>Pecora</taxon>
        <taxon>Bovidae</taxon>
        <taxon>Caprinae</taxon>
        <taxon>Ovis</taxon>
    </lineage>
</organism>
<name>IL3_SHEEP</name>
<proteinExistence type="evidence at transcript level"/>
<evidence type="ECO:0000255" key="1"/>
<evidence type="ECO:0000305" key="2"/>
<keyword id="KW-0202">Cytokine</keyword>
<keyword id="KW-0325">Glycoprotein</keyword>
<keyword id="KW-0339">Growth factor</keyword>
<keyword id="KW-1185">Reference proteome</keyword>
<keyword id="KW-0964">Secreted</keyword>
<keyword id="KW-0732">Signal</keyword>
<protein>
    <recommendedName>
        <fullName>Interleukin-3</fullName>
        <shortName>IL-3</shortName>
    </recommendedName>
    <alternativeName>
        <fullName>Hematopoietic growth factor</fullName>
    </alternativeName>
    <alternativeName>
        <fullName>Mast cell growth factor</fullName>
        <shortName>MCGF</shortName>
    </alternativeName>
    <alternativeName>
        <fullName>Multipotential colony-stimulating factor</fullName>
    </alternativeName>
    <alternativeName>
        <fullName>P-cell-stimulating factor</fullName>
    </alternativeName>
</protein>
<feature type="signal peptide" evidence="1">
    <location>
        <begin position="1"/>
        <end position="17"/>
    </location>
</feature>
<feature type="chain" id="PRO_0000015523" description="Interleukin-3">
    <location>
        <begin position="18"/>
        <end position="146"/>
    </location>
</feature>
<feature type="glycosylation site" description="N-linked (GlcNAc...) asparagine" evidence="1">
    <location>
        <position position="65"/>
    </location>
</feature>
<reference key="1">
    <citation type="journal article" date="1993" name="Exp. Hematol.">
        <title>The cloning and expression of the gene for ovine interleukin-3 (multi-CSF) and a comparison of the in vitro hematopoietic activity of ovine IL-3 with ovine GM-CSF and human M-CSF.</title>
        <authorList>
            <person name="McInnes C.J."/>
            <person name="Haig D."/>
            <person name="Logan M."/>
        </authorList>
    </citation>
    <scope>NUCLEOTIDE SEQUENCE [GENOMIC DNA]</scope>
    <source>
        <strain>Suffolk</strain>
    </source>
</reference>
<reference key="2">
    <citation type="journal article" date="1994" name="Gene">
        <title>Cloning of a cDNA encoding ovine interleukin-3.</title>
        <authorList>
            <person name="McInnes C.J."/>
            <person name="Logan M."/>
            <person name="Haig D."/>
            <person name="Wright F."/>
        </authorList>
    </citation>
    <scope>NUCLEOTIDE SEQUENCE [MRNA]</scope>
</reference>
<comment type="function">
    <text>Granulocyte/macrophage colony-stimulating factors are cytokines that act in hematopoiesis by controlling the production, differentiation, and function of 2 related white cell populations of the blood, the granulocytes and the monocytes-macrophages.</text>
</comment>
<comment type="function">
    <text>This CSF induces granulocytes, macrophages, mast cells, stem cells, erythroid cells, eosinophils and megakaryocytes.</text>
</comment>
<comment type="subunit">
    <text>Monomer.</text>
</comment>
<comment type="subcellular location">
    <subcellularLocation>
        <location>Secreted</location>
    </subcellularLocation>
</comment>
<comment type="tissue specificity">
    <text>Activated T-cells, mast cells, natural killer cells.</text>
</comment>
<comment type="similarity">
    <text evidence="2">Belongs to the IL-3 family.</text>
</comment>